<accession>Q57669</accession>
<sequence>MATAASAIEYSSVKSIAGPLLIVEGVEGAAYGEIVEVICPDGEKRMGQVLEAREGLAVVQVFEGTTGLSTKDTRVRFTGRTAKIGVSMEMLGRIFNGAGKPIDGGPEIVPEKELDINGYPLNPVSRKVPSDFIQTGISTIDGMNTLVRGQKLPIFSGSGLPHNQLAAQIARQAKVRGEGEKFAVVFAAMGITSEEANFFMEEFRKTGALERAVVFINLADDPAIERILTPRIALTVAEYLAYEKDMHVLVILTDMTNYCEALREISAARNEVPGRRGYPGYMYTDLATIYERAGRVKGRTGTITQIPILTMPDDDITHPIPDLTGYITEGQIVLSRELHRKGIYPPVDVLPSLSRLAGNGQGPGKTREDHKKVVNQAYAAYAEGRSLRDLVAVVGEEALTDRDRAYLKFADEFEDKFVRQGKDEDRSIEETLDLLWELLAILPEEELKRVDRELIEKYHPKYRKK</sequence>
<protein>
    <recommendedName>
        <fullName evidence="1">A-type ATP synthase subunit B</fullName>
    </recommendedName>
    <alternativeName>
        <fullName evidence="4">A1A0-type ATP synthase subunit B</fullName>
    </alternativeName>
</protein>
<evidence type="ECO:0000255" key="1">
    <source>
        <dbReference type="HAMAP-Rule" id="MF_00310"/>
    </source>
</evidence>
<evidence type="ECO:0000269" key="2">
    <source>
    </source>
</evidence>
<evidence type="ECO:0000269" key="3">
    <source>
    </source>
</evidence>
<evidence type="ECO:0000303" key="4">
    <source>
    </source>
</evidence>
<evidence type="ECO:0000303" key="5">
    <source>
    </source>
</evidence>
<evidence type="ECO:0000305" key="6">
    <source>
    </source>
</evidence>
<keyword id="KW-0066">ATP synthesis</keyword>
<keyword id="KW-1003">Cell membrane</keyword>
<keyword id="KW-0903">Direct protein sequencing</keyword>
<keyword id="KW-0375">Hydrogen ion transport</keyword>
<keyword id="KW-0406">Ion transport</keyword>
<keyword id="KW-0472">Membrane</keyword>
<keyword id="KW-1185">Reference proteome</keyword>
<keyword id="KW-0813">Transport</keyword>
<feature type="initiator methionine" description="Removed" evidence="2">
    <location>
        <position position="1"/>
    </location>
</feature>
<feature type="chain" id="PRO_0000144656" description="A-type ATP synthase subunit B">
    <location>
        <begin position="2"/>
        <end position="465"/>
    </location>
</feature>
<feature type="sequence conflict" description="In Ref. 2; AA sequence." evidence="2" ref="2">
    <location>
        <position position="4"/>
    </location>
</feature>
<name>AATB_METJA</name>
<organism>
    <name type="scientific">Methanocaldococcus jannaschii (strain ATCC 43067 / DSM 2661 / JAL-1 / JCM 10045 / NBRC 100440)</name>
    <name type="common">Methanococcus jannaschii</name>
    <dbReference type="NCBI Taxonomy" id="243232"/>
    <lineage>
        <taxon>Archaea</taxon>
        <taxon>Methanobacteriati</taxon>
        <taxon>Methanobacteriota</taxon>
        <taxon>Methanomada group</taxon>
        <taxon>Methanococci</taxon>
        <taxon>Methanococcales</taxon>
        <taxon>Methanocaldococcaceae</taxon>
        <taxon>Methanocaldococcus</taxon>
    </lineage>
</organism>
<gene>
    <name evidence="1 5" type="primary">atpB</name>
    <name type="ordered locus">MJ0216</name>
</gene>
<dbReference type="EMBL" id="L77117">
    <property type="protein sequence ID" value="AAB98199.1"/>
    <property type="molecule type" value="Genomic_DNA"/>
</dbReference>
<dbReference type="PIR" id="A64327">
    <property type="entry name" value="A64327"/>
</dbReference>
<dbReference type="RefSeq" id="WP_010869712.1">
    <property type="nucleotide sequence ID" value="NC_000909.1"/>
</dbReference>
<dbReference type="SMR" id="Q57669"/>
<dbReference type="FunCoup" id="Q57669">
    <property type="interactions" value="47"/>
</dbReference>
<dbReference type="STRING" id="243232.MJ_0216"/>
<dbReference type="PaxDb" id="243232-MJ_0216"/>
<dbReference type="EnsemblBacteria" id="AAB98199">
    <property type="protein sequence ID" value="AAB98199"/>
    <property type="gene ID" value="MJ_0216"/>
</dbReference>
<dbReference type="GeneID" id="1451066"/>
<dbReference type="KEGG" id="mja:MJ_0216"/>
<dbReference type="eggNOG" id="arCOG00865">
    <property type="taxonomic scope" value="Archaea"/>
</dbReference>
<dbReference type="HOGENOM" id="CLU_022916_0_0_2"/>
<dbReference type="InParanoid" id="Q57669"/>
<dbReference type="OrthoDB" id="32941at2157"/>
<dbReference type="PhylomeDB" id="Q57669"/>
<dbReference type="Proteomes" id="UP000000805">
    <property type="component" value="Chromosome"/>
</dbReference>
<dbReference type="GO" id="GO:0005886">
    <property type="term" value="C:plasma membrane"/>
    <property type="evidence" value="ECO:0007669"/>
    <property type="project" value="UniProtKB-SubCell"/>
</dbReference>
<dbReference type="GO" id="GO:0033178">
    <property type="term" value="C:proton-transporting two-sector ATPase complex, catalytic domain"/>
    <property type="evidence" value="ECO:0007669"/>
    <property type="project" value="InterPro"/>
</dbReference>
<dbReference type="GO" id="GO:0005524">
    <property type="term" value="F:ATP binding"/>
    <property type="evidence" value="ECO:0007669"/>
    <property type="project" value="UniProtKB-UniRule"/>
</dbReference>
<dbReference type="GO" id="GO:0046933">
    <property type="term" value="F:proton-transporting ATP synthase activity, rotational mechanism"/>
    <property type="evidence" value="ECO:0007669"/>
    <property type="project" value="UniProtKB-UniRule"/>
</dbReference>
<dbReference type="GO" id="GO:0042777">
    <property type="term" value="P:proton motive force-driven plasma membrane ATP synthesis"/>
    <property type="evidence" value="ECO:0007669"/>
    <property type="project" value="UniProtKB-UniRule"/>
</dbReference>
<dbReference type="CDD" id="cd18112">
    <property type="entry name" value="ATP-synt_V_A-type_beta_C"/>
    <property type="match status" value="1"/>
</dbReference>
<dbReference type="CDD" id="cd18118">
    <property type="entry name" value="ATP-synt_V_A-type_beta_N"/>
    <property type="match status" value="1"/>
</dbReference>
<dbReference type="CDD" id="cd01135">
    <property type="entry name" value="V_A-ATPase_B"/>
    <property type="match status" value="1"/>
</dbReference>
<dbReference type="Gene3D" id="3.40.50.12240">
    <property type="match status" value="1"/>
</dbReference>
<dbReference type="HAMAP" id="MF_00310">
    <property type="entry name" value="ATP_synth_B_arch"/>
    <property type="match status" value="1"/>
</dbReference>
<dbReference type="InterPro" id="IPR055190">
    <property type="entry name" value="ATP-synt_VA_C"/>
</dbReference>
<dbReference type="InterPro" id="IPR020003">
    <property type="entry name" value="ATPase_a/bsu_AS"/>
</dbReference>
<dbReference type="InterPro" id="IPR005724">
    <property type="entry name" value="ATPase_A1-cplx_bsu"/>
</dbReference>
<dbReference type="InterPro" id="IPR004100">
    <property type="entry name" value="ATPase_F1/V1/A1_a/bsu_N"/>
</dbReference>
<dbReference type="InterPro" id="IPR000194">
    <property type="entry name" value="ATPase_F1/V1/A1_a/bsu_nucl-bd"/>
</dbReference>
<dbReference type="InterPro" id="IPR027417">
    <property type="entry name" value="P-loop_NTPase"/>
</dbReference>
<dbReference type="InterPro" id="IPR022879">
    <property type="entry name" value="V-ATPase_su_B/beta"/>
</dbReference>
<dbReference type="NCBIfam" id="TIGR01041">
    <property type="entry name" value="ATP_syn_B_arch"/>
    <property type="match status" value="1"/>
</dbReference>
<dbReference type="NCBIfam" id="NF003235">
    <property type="entry name" value="PRK04196.1"/>
    <property type="match status" value="1"/>
</dbReference>
<dbReference type="PANTHER" id="PTHR43389">
    <property type="entry name" value="V-TYPE PROTON ATPASE SUBUNIT B"/>
    <property type="match status" value="1"/>
</dbReference>
<dbReference type="PANTHER" id="PTHR43389:SF4">
    <property type="entry name" value="V-TYPE PROTON ATPASE SUBUNIT B"/>
    <property type="match status" value="1"/>
</dbReference>
<dbReference type="Pfam" id="PF00006">
    <property type="entry name" value="ATP-synt_ab"/>
    <property type="match status" value="1"/>
</dbReference>
<dbReference type="Pfam" id="PF02874">
    <property type="entry name" value="ATP-synt_ab_N"/>
    <property type="match status" value="1"/>
</dbReference>
<dbReference type="Pfam" id="PF22919">
    <property type="entry name" value="ATP-synt_VA_C"/>
    <property type="match status" value="1"/>
</dbReference>
<dbReference type="PIRSF" id="PIRSF039114">
    <property type="entry name" value="V-ATPsynth_beta/V-ATPase_B"/>
    <property type="match status" value="1"/>
</dbReference>
<dbReference type="SUPFAM" id="SSF47917">
    <property type="entry name" value="C-terminal domain of alpha and beta subunits of F1 ATP synthase"/>
    <property type="match status" value="1"/>
</dbReference>
<dbReference type="SUPFAM" id="SSF52540">
    <property type="entry name" value="P-loop containing nucleoside triphosphate hydrolases"/>
    <property type="match status" value="1"/>
</dbReference>
<dbReference type="PROSITE" id="PS00152">
    <property type="entry name" value="ATPASE_ALPHA_BETA"/>
    <property type="match status" value="1"/>
</dbReference>
<proteinExistence type="evidence at protein level"/>
<comment type="function">
    <text evidence="1 6">Component of the A-type ATP synthase that produces ATP from ADP in the presence of a proton gradient across the membrane. The B chain is a regulatory subunit.</text>
</comment>
<comment type="biophysicochemical properties">
    <phDependence>
        <text evidence="2">Optimum pH is 6.0 for ATP hydrolysis.</text>
    </phDependence>
    <temperatureDependence>
        <text evidence="2">Optimum temperature is 80 degrees Celsius.</text>
    </temperatureDependence>
</comment>
<comment type="subunit">
    <text evidence="2 3">The A-type ATPase is composed of subunits A(3), B(3), C, D, E(1 or 2), F, H(2), I and proteolipid K(x) (PubMed:12768457, PubMed:15220347).</text>
</comment>
<comment type="subcellular location">
    <subcellularLocation>
        <location evidence="1 2 3">Cell membrane</location>
        <topology evidence="1 2 3">Peripheral membrane protein</topology>
        <orientation evidence="2 3">Cytoplasmic side</orientation>
    </subcellularLocation>
</comment>
<comment type="domain">
    <text evidence="2 3">Purified ATP synthase is 25.9 nm long. The hydrophilic A1 domain is 9.4 X 11.5 nm, the central stalk is 8.0 X 3.9 nm and the membrane-bound A0 domain is 6.4 X 10.6 nm; the domains are connected by two stalks. ATP is synthesized or hydrolyzed by the A1 domain while ion translocation occurs via the A0 domain.</text>
</comment>
<comment type="similarity">
    <text evidence="1">Belongs to the ATPase alpha/beta chains family.</text>
</comment>
<reference key="1">
    <citation type="journal article" date="1996" name="Science">
        <title>Complete genome sequence of the methanogenic archaeon, Methanococcus jannaschii.</title>
        <authorList>
            <person name="Bult C.J."/>
            <person name="White O."/>
            <person name="Olsen G.J."/>
            <person name="Zhou L."/>
            <person name="Fleischmann R.D."/>
            <person name="Sutton G.G."/>
            <person name="Blake J.A."/>
            <person name="FitzGerald L.M."/>
            <person name="Clayton R.A."/>
            <person name="Gocayne J.D."/>
            <person name="Kerlavage A.R."/>
            <person name="Dougherty B.A."/>
            <person name="Tomb J.-F."/>
            <person name="Adams M.D."/>
            <person name="Reich C.I."/>
            <person name="Overbeek R."/>
            <person name="Kirkness E.F."/>
            <person name="Weinstock K.G."/>
            <person name="Merrick J.M."/>
            <person name="Glodek A."/>
            <person name="Scott J.L."/>
            <person name="Geoghagen N.S.M."/>
            <person name="Weidman J.F."/>
            <person name="Fuhrmann J.L."/>
            <person name="Nguyen D."/>
            <person name="Utterback T.R."/>
            <person name="Kelley J.M."/>
            <person name="Peterson J.D."/>
            <person name="Sadow P.W."/>
            <person name="Hanna M.C."/>
            <person name="Cotton M.D."/>
            <person name="Roberts K.M."/>
            <person name="Hurst M.A."/>
            <person name="Kaine B.P."/>
            <person name="Borodovsky M."/>
            <person name="Klenk H.-P."/>
            <person name="Fraser C.M."/>
            <person name="Smith H.O."/>
            <person name="Woese C.R."/>
            <person name="Venter J.C."/>
        </authorList>
    </citation>
    <scope>NUCLEOTIDE SEQUENCE [LARGE SCALE GENOMIC DNA]</scope>
    <source>
        <strain>ATCC 43067 / DSM 2661 / JAL-1 / JCM 10045 / NBRC 100440</strain>
    </source>
</reference>
<reference key="2">
    <citation type="journal article" date="2003" name="Extremophiles">
        <title>Isolation of a complete A1AO ATP synthase comprising nine subunits from the hyperthermophile Methanococcus jannaschii.</title>
        <authorList>
            <person name="Lingl A."/>
            <person name="Huber H."/>
            <person name="Stetter K.O."/>
            <person name="Mayer F."/>
            <person name="Kellermann J."/>
            <person name="Mueller V."/>
        </authorList>
    </citation>
    <scope>PROTEIN SEQUENCE OF 2-9</scope>
    <scope>FUNCTION</scope>
    <scope>BIOPHYSICOCHEMICAL PROPERTIES</scope>
    <scope>SUBUNIT</scope>
    <scope>SUBCELLULAR LOCATION</scope>
    <scope>DOMAIN</scope>
    <source>
        <strain>ATCC 43067 / DSM 2661 / JAL-1 / JCM 10045 / NBRC 100440</strain>
    </source>
</reference>
<reference key="3">
    <citation type="journal article" date="2004" name="J. Biol. Chem.">
        <title>Structure and subunit arrangement of the A-type ATP synthase complex from the archaeon Methanococcus jannaschii visualized by electron microscopy.</title>
        <authorList>
            <person name="Coskun U."/>
            <person name="Chaban Y.L."/>
            <person name="Lingl A."/>
            <person name="Mueller V."/>
            <person name="Keegstra W."/>
            <person name="Boekema E.J."/>
            <person name="Grueber G."/>
        </authorList>
    </citation>
    <scope>STRUCTURE BY ELECTRON MICROSCOPY (18 ANGSTROMS) OF A-TYPE ATP SYNTHASE</scope>
    <scope>SUBUNIT</scope>
    <scope>SUBCELLULAR LOCATION</scope>
    <scope>DOMAIN</scope>
    <source>
        <strain>ATCC 43067 / DSM 2661 / JAL-1 / JCM 10045 / NBRC 100440</strain>
    </source>
</reference>